<name>YDW7_SCHPO</name>
<feature type="chain" id="PRO_0000116672" description="Uncharacterized protein C23C11.07">
    <location>
        <begin position="1"/>
        <end position="110"/>
    </location>
</feature>
<dbReference type="EMBL" id="CU329670">
    <property type="protein sequence ID" value="CAB11160.1"/>
    <property type="molecule type" value="Genomic_DNA"/>
</dbReference>
<dbReference type="PIR" id="T38245">
    <property type="entry name" value="T38245"/>
</dbReference>
<dbReference type="RefSeq" id="NP_593638.1">
    <property type="nucleotide sequence ID" value="NM_001019069.1"/>
</dbReference>
<dbReference type="BioGRID" id="278512">
    <property type="interactions" value="2"/>
</dbReference>
<dbReference type="PaxDb" id="4896-SPAC23C11.07.1"/>
<dbReference type="EnsemblFungi" id="SPAC23C11.07.1">
    <property type="protein sequence ID" value="SPAC23C11.07.1:pep"/>
    <property type="gene ID" value="SPAC23C11.07"/>
</dbReference>
<dbReference type="KEGG" id="spo:2542030"/>
<dbReference type="PomBase" id="SPAC23C11.07"/>
<dbReference type="VEuPathDB" id="FungiDB:SPAC23C11.07"/>
<dbReference type="HOGENOM" id="CLU_2172535_0_0_1"/>
<dbReference type="InParanoid" id="O13913"/>
<dbReference type="PRO" id="PR:O13913"/>
<dbReference type="Proteomes" id="UP000002485">
    <property type="component" value="Chromosome I"/>
</dbReference>
<dbReference type="GO" id="GO:0005829">
    <property type="term" value="C:cytosol"/>
    <property type="evidence" value="ECO:0007005"/>
    <property type="project" value="PomBase"/>
</dbReference>
<dbReference type="GO" id="GO:0005739">
    <property type="term" value="C:mitochondrion"/>
    <property type="evidence" value="ECO:0007005"/>
    <property type="project" value="PomBase"/>
</dbReference>
<dbReference type="GO" id="GO:0005634">
    <property type="term" value="C:nucleus"/>
    <property type="evidence" value="ECO:0007005"/>
    <property type="project" value="PomBase"/>
</dbReference>
<proteinExistence type="predicted"/>
<organism>
    <name type="scientific">Schizosaccharomyces pombe (strain 972 / ATCC 24843)</name>
    <name type="common">Fission yeast</name>
    <dbReference type="NCBI Taxonomy" id="284812"/>
    <lineage>
        <taxon>Eukaryota</taxon>
        <taxon>Fungi</taxon>
        <taxon>Dikarya</taxon>
        <taxon>Ascomycota</taxon>
        <taxon>Taphrinomycotina</taxon>
        <taxon>Schizosaccharomycetes</taxon>
        <taxon>Schizosaccharomycetales</taxon>
        <taxon>Schizosaccharomycetaceae</taxon>
        <taxon>Schizosaccharomyces</taxon>
    </lineage>
</organism>
<sequence>MASHFLFTGKPWLQEKTPRLHLHPTWDLKASKSLARFPYTPLESLLAPISAFHPTYLNSAAPSKAQSHPVLLAAGVGGIVVRCPSRKPIYRTTRIQYLLLISHFTTALFK</sequence>
<accession>O13913</accession>
<keyword id="KW-1185">Reference proteome</keyword>
<reference key="1">
    <citation type="journal article" date="2002" name="Nature">
        <title>The genome sequence of Schizosaccharomyces pombe.</title>
        <authorList>
            <person name="Wood V."/>
            <person name="Gwilliam R."/>
            <person name="Rajandream M.A."/>
            <person name="Lyne M.H."/>
            <person name="Lyne R."/>
            <person name="Stewart A."/>
            <person name="Sgouros J.G."/>
            <person name="Peat N."/>
            <person name="Hayles J."/>
            <person name="Baker S.G."/>
            <person name="Basham D."/>
            <person name="Bowman S."/>
            <person name="Brooks K."/>
            <person name="Brown D."/>
            <person name="Brown S."/>
            <person name="Chillingworth T."/>
            <person name="Churcher C.M."/>
            <person name="Collins M."/>
            <person name="Connor R."/>
            <person name="Cronin A."/>
            <person name="Davis P."/>
            <person name="Feltwell T."/>
            <person name="Fraser A."/>
            <person name="Gentles S."/>
            <person name="Goble A."/>
            <person name="Hamlin N."/>
            <person name="Harris D.E."/>
            <person name="Hidalgo J."/>
            <person name="Hodgson G."/>
            <person name="Holroyd S."/>
            <person name="Hornsby T."/>
            <person name="Howarth S."/>
            <person name="Huckle E.J."/>
            <person name="Hunt S."/>
            <person name="Jagels K."/>
            <person name="James K.D."/>
            <person name="Jones L."/>
            <person name="Jones M."/>
            <person name="Leather S."/>
            <person name="McDonald S."/>
            <person name="McLean J."/>
            <person name="Mooney P."/>
            <person name="Moule S."/>
            <person name="Mungall K.L."/>
            <person name="Murphy L.D."/>
            <person name="Niblett D."/>
            <person name="Odell C."/>
            <person name="Oliver K."/>
            <person name="O'Neil S."/>
            <person name="Pearson D."/>
            <person name="Quail M.A."/>
            <person name="Rabbinowitsch E."/>
            <person name="Rutherford K.M."/>
            <person name="Rutter S."/>
            <person name="Saunders D."/>
            <person name="Seeger K."/>
            <person name="Sharp S."/>
            <person name="Skelton J."/>
            <person name="Simmonds M.N."/>
            <person name="Squares R."/>
            <person name="Squares S."/>
            <person name="Stevens K."/>
            <person name="Taylor K."/>
            <person name="Taylor R.G."/>
            <person name="Tivey A."/>
            <person name="Walsh S.V."/>
            <person name="Warren T."/>
            <person name="Whitehead S."/>
            <person name="Woodward J.R."/>
            <person name="Volckaert G."/>
            <person name="Aert R."/>
            <person name="Robben J."/>
            <person name="Grymonprez B."/>
            <person name="Weltjens I."/>
            <person name="Vanstreels E."/>
            <person name="Rieger M."/>
            <person name="Schaefer M."/>
            <person name="Mueller-Auer S."/>
            <person name="Gabel C."/>
            <person name="Fuchs M."/>
            <person name="Duesterhoeft A."/>
            <person name="Fritzc C."/>
            <person name="Holzer E."/>
            <person name="Moestl D."/>
            <person name="Hilbert H."/>
            <person name="Borzym K."/>
            <person name="Langer I."/>
            <person name="Beck A."/>
            <person name="Lehrach H."/>
            <person name="Reinhardt R."/>
            <person name="Pohl T.M."/>
            <person name="Eger P."/>
            <person name="Zimmermann W."/>
            <person name="Wedler H."/>
            <person name="Wambutt R."/>
            <person name="Purnelle B."/>
            <person name="Goffeau A."/>
            <person name="Cadieu E."/>
            <person name="Dreano S."/>
            <person name="Gloux S."/>
            <person name="Lelaure V."/>
            <person name="Mottier S."/>
            <person name="Galibert F."/>
            <person name="Aves S.J."/>
            <person name="Xiang Z."/>
            <person name="Hunt C."/>
            <person name="Moore K."/>
            <person name="Hurst S.M."/>
            <person name="Lucas M."/>
            <person name="Rochet M."/>
            <person name="Gaillardin C."/>
            <person name="Tallada V.A."/>
            <person name="Garzon A."/>
            <person name="Thode G."/>
            <person name="Daga R.R."/>
            <person name="Cruzado L."/>
            <person name="Jimenez J."/>
            <person name="Sanchez M."/>
            <person name="del Rey F."/>
            <person name="Benito J."/>
            <person name="Dominguez A."/>
            <person name="Revuelta J.L."/>
            <person name="Moreno S."/>
            <person name="Armstrong J."/>
            <person name="Forsburg S.L."/>
            <person name="Cerutti L."/>
            <person name="Lowe T."/>
            <person name="McCombie W.R."/>
            <person name="Paulsen I."/>
            <person name="Potashkin J."/>
            <person name="Shpakovski G.V."/>
            <person name="Ussery D."/>
            <person name="Barrell B.G."/>
            <person name="Nurse P."/>
        </authorList>
    </citation>
    <scope>NUCLEOTIDE SEQUENCE [LARGE SCALE GENOMIC DNA]</scope>
    <source>
        <strain>972 / ATCC 24843</strain>
    </source>
</reference>
<gene>
    <name type="ORF">SPAC23C11.07</name>
</gene>
<protein>
    <recommendedName>
        <fullName>Uncharacterized protein C23C11.07</fullName>
    </recommendedName>
</protein>